<accession>P96994</accession>
<sequence length="491" mass="55445">MTALLDTFVSKIIENSDYAELDATYLSNRILALVGEDNAQQDTNQSNLIALKDELVDLAVVNGKVGDLAEEKDCLGAELMNFITPIPSQVNKAFWDTNAKSPQKAIKDFYELSKRNNYIKVTAIAKNIAFTTSSVYGDIDITINLSKPEKDPKAIAAAKLAKTSNYPKCQLCMENEGYQGRINYPARANHRIIRMNLGDEKWGFQYSPYAYFNEHCIFLNTEHVPMVISQNTFRQLLDIVDIFPGYFAGSNSDLPIVGGSILSHNHYQGGRHIFPMEIAELDSVFRFKDFPDVTAGIVKWPMSVIRLRGANKYSLVELAEIIRLAWRNYSDDTMNILAFTGDTPHHTVTPIARKRDGQFELDIVLRDNHTTAEYPDGVYHPHIDVQHIKKENIGLIEVMGLAILPPRLKKELAEVEKYVLNQYNEMADYHKDWADAIKASHPETSSETVSEIVKQAVGRTFVRVLEDAGVYKRNRQGQAAFMRFVESIGVK</sequence>
<dbReference type="EC" id="2.7.7.12"/>
<dbReference type="EMBL" id="U21942">
    <property type="protein sequence ID" value="AAB49737.1"/>
    <property type="molecule type" value="Genomic_DNA"/>
</dbReference>
<dbReference type="EMBL" id="AE014133">
    <property type="protein sequence ID" value="AAN58601.1"/>
    <property type="molecule type" value="Genomic_DNA"/>
</dbReference>
<dbReference type="PIR" id="JC5312">
    <property type="entry name" value="JC5312"/>
</dbReference>
<dbReference type="RefSeq" id="NP_721295.1">
    <property type="nucleotide sequence ID" value="NC_004350.2"/>
</dbReference>
<dbReference type="RefSeq" id="WP_002352255.1">
    <property type="nucleotide sequence ID" value="NC_004350.2"/>
</dbReference>
<dbReference type="STRING" id="210007.SMU_887"/>
<dbReference type="KEGG" id="smu:SMU_887"/>
<dbReference type="PATRIC" id="fig|210007.7.peg.794"/>
<dbReference type="eggNOG" id="COG4468">
    <property type="taxonomic scope" value="Bacteria"/>
</dbReference>
<dbReference type="HOGENOM" id="CLU_047799_0_0_9"/>
<dbReference type="OrthoDB" id="2293at2"/>
<dbReference type="PhylomeDB" id="P96994"/>
<dbReference type="UniPathway" id="UPA00214"/>
<dbReference type="Proteomes" id="UP000002512">
    <property type="component" value="Chromosome"/>
</dbReference>
<dbReference type="GO" id="GO:0005737">
    <property type="term" value="C:cytoplasm"/>
    <property type="evidence" value="ECO:0007669"/>
    <property type="project" value="UniProtKB-SubCell"/>
</dbReference>
<dbReference type="GO" id="GO:0008108">
    <property type="term" value="F:UDP-glucose:hexose-1-phosphate uridylyltransferase activity"/>
    <property type="evidence" value="ECO:0007669"/>
    <property type="project" value="UniProtKB-UniRule"/>
</dbReference>
<dbReference type="GO" id="GO:0006012">
    <property type="term" value="P:galactose metabolic process"/>
    <property type="evidence" value="ECO:0007669"/>
    <property type="project" value="UniProtKB-UniRule"/>
</dbReference>
<dbReference type="HAMAP" id="MF_00571">
    <property type="entry name" value="GalP_UDP_trans"/>
    <property type="match status" value="1"/>
</dbReference>
<dbReference type="InterPro" id="IPR000766">
    <property type="entry name" value="GalP_uridyl_Trfase_II"/>
</dbReference>
<dbReference type="InterPro" id="IPR023425">
    <property type="entry name" value="GalP_uridyl_Trfase_II_CS"/>
</dbReference>
<dbReference type="InterPro" id="IPR005850">
    <property type="entry name" value="GalP_Utransf_C"/>
</dbReference>
<dbReference type="InterPro" id="IPR005849">
    <property type="entry name" value="GalP_Utransf_N"/>
</dbReference>
<dbReference type="NCBIfam" id="TIGR01239">
    <property type="entry name" value="galT_2"/>
    <property type="match status" value="1"/>
</dbReference>
<dbReference type="NCBIfam" id="NF003629">
    <property type="entry name" value="PRK05270.1-2"/>
    <property type="match status" value="1"/>
</dbReference>
<dbReference type="NCBIfam" id="NF003631">
    <property type="entry name" value="PRK05270.1-5"/>
    <property type="match status" value="1"/>
</dbReference>
<dbReference type="NCBIfam" id="NF003633">
    <property type="entry name" value="PRK05270.2-2"/>
    <property type="match status" value="1"/>
</dbReference>
<dbReference type="PANTHER" id="PTHR39191:SF1">
    <property type="entry name" value="DUF4922 DOMAIN-CONTAINING PROTEIN"/>
    <property type="match status" value="1"/>
</dbReference>
<dbReference type="PANTHER" id="PTHR39191">
    <property type="entry name" value="GALACTOSE-1-PHOSPHATE URIDYLYLTRANSFERASE"/>
    <property type="match status" value="1"/>
</dbReference>
<dbReference type="Pfam" id="PF02744">
    <property type="entry name" value="GalP_UDP_tr_C"/>
    <property type="match status" value="1"/>
</dbReference>
<dbReference type="Pfam" id="PF01087">
    <property type="entry name" value="GalP_UDP_transf"/>
    <property type="match status" value="1"/>
</dbReference>
<dbReference type="PIRSF" id="PIRSF006005">
    <property type="entry name" value="GalT_BS"/>
    <property type="match status" value="1"/>
</dbReference>
<dbReference type="PROSITE" id="PS01163">
    <property type="entry name" value="GAL_P_UDP_TRANSF_II"/>
    <property type="match status" value="1"/>
</dbReference>
<feature type="chain" id="PRO_0000169913" description="Galactose-1-phosphate uridylyltransferase">
    <location>
        <begin position="1"/>
        <end position="491"/>
    </location>
</feature>
<feature type="sequence conflict" description="In Ref. 1; AAB49737." evidence="1" ref="1">
    <original>S</original>
    <variation>R</variation>
    <location>
        <position position="27"/>
    </location>
</feature>
<feature type="sequence conflict" description="In Ref. 1; AAB49737." evidence="1" ref="1">
    <original>L</original>
    <variation>R</variation>
    <location>
        <position position="48"/>
    </location>
</feature>
<feature type="sequence conflict" description="In Ref. 1; AAB49737." evidence="1" ref="1">
    <original>N</original>
    <variation>Y</variation>
    <location>
        <position position="98"/>
    </location>
</feature>
<feature type="sequence conflict" description="In Ref. 1; AAB49737." evidence="1" ref="1">
    <original>N</original>
    <variation>D</variation>
    <location>
        <position position="117"/>
    </location>
</feature>
<feature type="sequence conflict" description="In Ref. 1; AAB49737." evidence="1" ref="1">
    <original>R</original>
    <variation>H</variation>
    <location>
        <position position="286"/>
    </location>
</feature>
<feature type="sequence conflict" description="In Ref. 1; AAB49737." evidence="1" ref="1">
    <original>I</original>
    <variation>V</variation>
    <location>
        <position position="383"/>
    </location>
</feature>
<feature type="sequence conflict" description="In Ref. 1; AAB49737." evidence="1" ref="1">
    <original>I</original>
    <variation>V</variation>
    <location>
        <position position="452"/>
    </location>
</feature>
<evidence type="ECO:0000305" key="1"/>
<proteinExistence type="inferred from homology"/>
<name>GALT_STRMU</name>
<organism>
    <name type="scientific">Streptococcus mutans serotype c (strain ATCC 700610 / UA159)</name>
    <dbReference type="NCBI Taxonomy" id="210007"/>
    <lineage>
        <taxon>Bacteria</taxon>
        <taxon>Bacillati</taxon>
        <taxon>Bacillota</taxon>
        <taxon>Bacilli</taxon>
        <taxon>Lactobacillales</taxon>
        <taxon>Streptococcaceae</taxon>
        <taxon>Streptococcus</taxon>
    </lineage>
</organism>
<protein>
    <recommendedName>
        <fullName>Galactose-1-phosphate uridylyltransferase</fullName>
        <shortName>Gal-1-P uridylyltransferase</shortName>
        <ecNumber>2.7.7.12</ecNumber>
    </recommendedName>
    <alternativeName>
        <fullName>UDP-glucose--hexose-1-phosphate uridylyltransferase</fullName>
    </alternativeName>
</protein>
<reference key="1">
    <citation type="journal article" date="1996" name="Gene">
        <title>Organization and nucleotide sequence of the Streptococcus mutans galactose operon.</title>
        <authorList>
            <person name="Ajdic D."/>
            <person name="Sutcliffe I.C."/>
            <person name="Russell R.R.B."/>
            <person name="Ferretti J.J."/>
        </authorList>
    </citation>
    <scope>NUCLEOTIDE SEQUENCE [GENOMIC DNA]</scope>
    <source>
        <strain>Ingbritt</strain>
    </source>
</reference>
<reference key="2">
    <citation type="journal article" date="2002" name="Proc. Natl. Acad. Sci. U.S.A.">
        <title>Genome sequence of Streptococcus mutans UA159, a cariogenic dental pathogen.</title>
        <authorList>
            <person name="Ajdic D.J."/>
            <person name="McShan W.M."/>
            <person name="McLaughlin R.E."/>
            <person name="Savic G."/>
            <person name="Chang J."/>
            <person name="Carson M.B."/>
            <person name="Primeaux C."/>
            <person name="Tian R."/>
            <person name="Kenton S."/>
            <person name="Jia H.G."/>
            <person name="Lin S.P."/>
            <person name="Qian Y."/>
            <person name="Li S."/>
            <person name="Zhu H."/>
            <person name="Najar F.Z."/>
            <person name="Lai H."/>
            <person name="White J."/>
            <person name="Roe B.A."/>
            <person name="Ferretti J.J."/>
        </authorList>
    </citation>
    <scope>NUCLEOTIDE SEQUENCE [LARGE SCALE GENOMIC DNA]</scope>
    <source>
        <strain>ATCC 700610 / UA159</strain>
    </source>
</reference>
<comment type="catalytic activity">
    <reaction>
        <text>alpha-D-galactose 1-phosphate + UDP-alpha-D-glucose = alpha-D-glucose 1-phosphate + UDP-alpha-D-galactose</text>
        <dbReference type="Rhea" id="RHEA:13989"/>
        <dbReference type="ChEBI" id="CHEBI:58336"/>
        <dbReference type="ChEBI" id="CHEBI:58601"/>
        <dbReference type="ChEBI" id="CHEBI:58885"/>
        <dbReference type="ChEBI" id="CHEBI:66914"/>
        <dbReference type="EC" id="2.7.7.12"/>
    </reaction>
</comment>
<comment type="pathway">
    <text>Carbohydrate metabolism; galactose metabolism.</text>
</comment>
<comment type="subcellular location">
    <subcellularLocation>
        <location evidence="1">Cytoplasm</location>
    </subcellularLocation>
</comment>
<comment type="similarity">
    <text evidence="1">Belongs to the galactose-1-phosphate uridylyltransferase type 2 family.</text>
</comment>
<gene>
    <name type="primary">galT</name>
    <name type="ordered locus">SMU_887</name>
</gene>
<keyword id="KW-0119">Carbohydrate metabolism</keyword>
<keyword id="KW-0963">Cytoplasm</keyword>
<keyword id="KW-0299">Galactose metabolism</keyword>
<keyword id="KW-0548">Nucleotidyltransferase</keyword>
<keyword id="KW-1185">Reference proteome</keyword>
<keyword id="KW-0808">Transferase</keyword>